<evidence type="ECO:0000255" key="1">
    <source>
        <dbReference type="HAMAP-Rule" id="MF_01007"/>
    </source>
</evidence>
<evidence type="ECO:0000305" key="2"/>
<sequence>MVTDQGGRTSEADGGPVRHIPVLLEEVLAALEPAPGKVILDGTFGAGGYASAILDAGAEVIALDRDPTAIAAGQSMVSASGGRLSLIHSRFSGLAEHAPAEGLDGVVLDVGVSSMQIDEAERGFSFQKKGPLDMRMSAAGVSAADVVNRAKVSDLIRIFGFLGEEKQAGRIARTIEKRRAEAPFETTRDLANLIETVTPRKAKDKIHPATRVFQALRIFVNDELGELAAALFAAERALKPGGRLVVVSFHSLEDRIVKTFFQDRSGKAGGSRHLPLVTARAATFAPVGKPMVSASDEEASRNPRARSAKLRAGIRTAAPSPGADLSIFNLPELASLARLGG</sequence>
<organism>
    <name type="scientific">Sinorhizobium medicae (strain WSM419)</name>
    <name type="common">Ensifer medicae</name>
    <dbReference type="NCBI Taxonomy" id="366394"/>
    <lineage>
        <taxon>Bacteria</taxon>
        <taxon>Pseudomonadati</taxon>
        <taxon>Pseudomonadota</taxon>
        <taxon>Alphaproteobacteria</taxon>
        <taxon>Hyphomicrobiales</taxon>
        <taxon>Rhizobiaceae</taxon>
        <taxon>Sinorhizobium/Ensifer group</taxon>
        <taxon>Sinorhizobium</taxon>
    </lineage>
</organism>
<proteinExistence type="inferred from homology"/>
<feature type="chain" id="PRO_0000387129" description="Ribosomal RNA small subunit methyltransferase H">
    <location>
        <begin position="1"/>
        <end position="341"/>
    </location>
</feature>
<feature type="binding site" evidence="1">
    <location>
        <begin position="47"/>
        <end position="49"/>
    </location>
    <ligand>
        <name>S-adenosyl-L-methionine</name>
        <dbReference type="ChEBI" id="CHEBI:59789"/>
    </ligand>
</feature>
<feature type="binding site" evidence="1">
    <location>
        <position position="64"/>
    </location>
    <ligand>
        <name>S-adenosyl-L-methionine</name>
        <dbReference type="ChEBI" id="CHEBI:59789"/>
    </ligand>
</feature>
<feature type="binding site" evidence="1">
    <location>
        <position position="91"/>
    </location>
    <ligand>
        <name>S-adenosyl-L-methionine</name>
        <dbReference type="ChEBI" id="CHEBI:59789"/>
    </ligand>
</feature>
<feature type="binding site" evidence="1">
    <location>
        <position position="109"/>
    </location>
    <ligand>
        <name>S-adenosyl-L-methionine</name>
        <dbReference type="ChEBI" id="CHEBI:59789"/>
    </ligand>
</feature>
<feature type="binding site" evidence="1">
    <location>
        <position position="116"/>
    </location>
    <ligand>
        <name>S-adenosyl-L-methionine</name>
        <dbReference type="ChEBI" id="CHEBI:59789"/>
    </ligand>
</feature>
<gene>
    <name evidence="1" type="primary">rsmH</name>
    <name type="synonym">mraW</name>
    <name type="ordered locus">Smed_2090</name>
</gene>
<keyword id="KW-0963">Cytoplasm</keyword>
<keyword id="KW-0489">Methyltransferase</keyword>
<keyword id="KW-0698">rRNA processing</keyword>
<keyword id="KW-0949">S-adenosyl-L-methionine</keyword>
<keyword id="KW-0808">Transferase</keyword>
<dbReference type="EC" id="2.1.1.199" evidence="1"/>
<dbReference type="EMBL" id="CP000738">
    <property type="protein sequence ID" value="ABR60923.1"/>
    <property type="status" value="ALT_INIT"/>
    <property type="molecule type" value="Genomic_DNA"/>
</dbReference>
<dbReference type="RefSeq" id="WP_024311510.1">
    <property type="nucleotide sequence ID" value="NC_009636.1"/>
</dbReference>
<dbReference type="RefSeq" id="YP_001327758.1">
    <property type="nucleotide sequence ID" value="NC_009636.1"/>
</dbReference>
<dbReference type="SMR" id="A6UB93"/>
<dbReference type="STRING" id="366394.Smed_2090"/>
<dbReference type="GeneID" id="61612999"/>
<dbReference type="KEGG" id="smd:Smed_2090"/>
<dbReference type="PATRIC" id="fig|366394.8.peg.5248"/>
<dbReference type="eggNOG" id="COG0275">
    <property type="taxonomic scope" value="Bacteria"/>
</dbReference>
<dbReference type="HOGENOM" id="CLU_038422_1_1_5"/>
<dbReference type="OrthoDB" id="9806637at2"/>
<dbReference type="Proteomes" id="UP000001108">
    <property type="component" value="Chromosome"/>
</dbReference>
<dbReference type="GO" id="GO:0005737">
    <property type="term" value="C:cytoplasm"/>
    <property type="evidence" value="ECO:0007669"/>
    <property type="project" value="UniProtKB-SubCell"/>
</dbReference>
<dbReference type="GO" id="GO:0071424">
    <property type="term" value="F:rRNA (cytosine-N4-)-methyltransferase activity"/>
    <property type="evidence" value="ECO:0007669"/>
    <property type="project" value="UniProtKB-UniRule"/>
</dbReference>
<dbReference type="GO" id="GO:0070475">
    <property type="term" value="P:rRNA base methylation"/>
    <property type="evidence" value="ECO:0007669"/>
    <property type="project" value="UniProtKB-UniRule"/>
</dbReference>
<dbReference type="Gene3D" id="1.10.150.170">
    <property type="entry name" value="Putative methyltransferase TM0872, insert domain"/>
    <property type="match status" value="1"/>
</dbReference>
<dbReference type="Gene3D" id="3.40.50.150">
    <property type="entry name" value="Vaccinia Virus protein VP39"/>
    <property type="match status" value="1"/>
</dbReference>
<dbReference type="HAMAP" id="MF_01007">
    <property type="entry name" value="16SrRNA_methyltr_H"/>
    <property type="match status" value="1"/>
</dbReference>
<dbReference type="InterPro" id="IPR002903">
    <property type="entry name" value="RsmH"/>
</dbReference>
<dbReference type="InterPro" id="IPR023397">
    <property type="entry name" value="SAM-dep_MeTrfase_MraW_recog"/>
</dbReference>
<dbReference type="InterPro" id="IPR029063">
    <property type="entry name" value="SAM-dependent_MTases_sf"/>
</dbReference>
<dbReference type="NCBIfam" id="TIGR00006">
    <property type="entry name" value="16S rRNA (cytosine(1402)-N(4))-methyltransferase RsmH"/>
    <property type="match status" value="1"/>
</dbReference>
<dbReference type="PANTHER" id="PTHR11265:SF0">
    <property type="entry name" value="12S RRNA N4-METHYLCYTIDINE METHYLTRANSFERASE"/>
    <property type="match status" value="1"/>
</dbReference>
<dbReference type="PANTHER" id="PTHR11265">
    <property type="entry name" value="S-ADENOSYL-METHYLTRANSFERASE MRAW"/>
    <property type="match status" value="1"/>
</dbReference>
<dbReference type="Pfam" id="PF01795">
    <property type="entry name" value="Methyltransf_5"/>
    <property type="match status" value="1"/>
</dbReference>
<dbReference type="PIRSF" id="PIRSF004486">
    <property type="entry name" value="MraW"/>
    <property type="match status" value="1"/>
</dbReference>
<dbReference type="SUPFAM" id="SSF81799">
    <property type="entry name" value="Putative methyltransferase TM0872, insert domain"/>
    <property type="match status" value="1"/>
</dbReference>
<dbReference type="SUPFAM" id="SSF53335">
    <property type="entry name" value="S-adenosyl-L-methionine-dependent methyltransferases"/>
    <property type="match status" value="1"/>
</dbReference>
<protein>
    <recommendedName>
        <fullName evidence="1">Ribosomal RNA small subunit methyltransferase H</fullName>
        <ecNumber evidence="1">2.1.1.199</ecNumber>
    </recommendedName>
    <alternativeName>
        <fullName evidence="1">16S rRNA m(4)C1402 methyltransferase</fullName>
    </alternativeName>
    <alternativeName>
        <fullName evidence="1">rRNA (cytosine-N(4)-)-methyltransferase RsmH</fullName>
    </alternativeName>
</protein>
<comment type="function">
    <text evidence="1">Specifically methylates the N4 position of cytidine in position 1402 (C1402) of 16S rRNA.</text>
</comment>
<comment type="catalytic activity">
    <reaction evidence="1">
        <text>cytidine(1402) in 16S rRNA + S-adenosyl-L-methionine = N(4)-methylcytidine(1402) in 16S rRNA + S-adenosyl-L-homocysteine + H(+)</text>
        <dbReference type="Rhea" id="RHEA:42928"/>
        <dbReference type="Rhea" id="RHEA-COMP:10286"/>
        <dbReference type="Rhea" id="RHEA-COMP:10287"/>
        <dbReference type="ChEBI" id="CHEBI:15378"/>
        <dbReference type="ChEBI" id="CHEBI:57856"/>
        <dbReference type="ChEBI" id="CHEBI:59789"/>
        <dbReference type="ChEBI" id="CHEBI:74506"/>
        <dbReference type="ChEBI" id="CHEBI:82748"/>
        <dbReference type="EC" id="2.1.1.199"/>
    </reaction>
</comment>
<comment type="subcellular location">
    <subcellularLocation>
        <location evidence="1">Cytoplasm</location>
    </subcellularLocation>
</comment>
<comment type="similarity">
    <text evidence="1">Belongs to the methyltransferase superfamily. RsmH family.</text>
</comment>
<comment type="sequence caution" evidence="2">
    <conflict type="erroneous initiation">
        <sequence resource="EMBL-CDS" id="ABR60923"/>
    </conflict>
</comment>
<reference key="1">
    <citation type="submission" date="2007-06" db="EMBL/GenBank/DDBJ databases">
        <title>Complete sequence of Sinorhizobium medicae WSM419 chromosome.</title>
        <authorList>
            <consortium name="US DOE Joint Genome Institute"/>
            <person name="Copeland A."/>
            <person name="Lucas S."/>
            <person name="Lapidus A."/>
            <person name="Barry K."/>
            <person name="Glavina del Rio T."/>
            <person name="Dalin E."/>
            <person name="Tice H."/>
            <person name="Pitluck S."/>
            <person name="Chain P."/>
            <person name="Malfatti S."/>
            <person name="Shin M."/>
            <person name="Vergez L."/>
            <person name="Schmutz J."/>
            <person name="Larimer F."/>
            <person name="Land M."/>
            <person name="Hauser L."/>
            <person name="Kyrpides N."/>
            <person name="Mikhailova N."/>
            <person name="Reeve W.G."/>
            <person name="Richardson P."/>
        </authorList>
    </citation>
    <scope>NUCLEOTIDE SEQUENCE [LARGE SCALE GENOMIC DNA]</scope>
    <source>
        <strain>WSM419</strain>
    </source>
</reference>
<accession>A6UB93</accession>
<name>RSMH_SINMW</name>